<gene>
    <name evidence="1" type="primary">rplO</name>
    <name type="ordered locus">ECH_0427</name>
</gene>
<organism>
    <name type="scientific">Ehrlichia chaffeensis (strain ATCC CRL-10679 / Arkansas)</name>
    <dbReference type="NCBI Taxonomy" id="205920"/>
    <lineage>
        <taxon>Bacteria</taxon>
        <taxon>Pseudomonadati</taxon>
        <taxon>Pseudomonadota</taxon>
        <taxon>Alphaproteobacteria</taxon>
        <taxon>Rickettsiales</taxon>
        <taxon>Anaplasmataceae</taxon>
        <taxon>Ehrlichia</taxon>
    </lineage>
</organism>
<name>RL15_EHRCR</name>
<sequence length="156" mass="16880">MDTVVKLNNIFSGLPKNKKSKVLGRGIGCGKGKTSGRGHKGQKARSGVSINGFEGGQQSIFTRLPKRGFNSLLKHRYSIVNLSTIQRLIDSKKIEDVSAITKEVLYNLGVISSIKEKIKILGNGKLNTAVAIEYDFISKSAESQVTLLSNVSASKE</sequence>
<accession>Q2GH38</accession>
<comment type="function">
    <text evidence="1">Binds to the 23S rRNA.</text>
</comment>
<comment type="subunit">
    <text evidence="1">Part of the 50S ribosomal subunit.</text>
</comment>
<comment type="similarity">
    <text evidence="1">Belongs to the universal ribosomal protein uL15 family.</text>
</comment>
<keyword id="KW-1185">Reference proteome</keyword>
<keyword id="KW-0687">Ribonucleoprotein</keyword>
<keyword id="KW-0689">Ribosomal protein</keyword>
<keyword id="KW-0694">RNA-binding</keyword>
<keyword id="KW-0699">rRNA-binding</keyword>
<proteinExistence type="inferred from homology"/>
<feature type="chain" id="PRO_0000251509" description="Large ribosomal subunit protein uL15">
    <location>
        <begin position="1"/>
        <end position="156"/>
    </location>
</feature>
<feature type="region of interest" description="Disordered" evidence="2">
    <location>
        <begin position="29"/>
        <end position="48"/>
    </location>
</feature>
<feature type="compositionally biased region" description="Basic residues" evidence="2">
    <location>
        <begin position="34"/>
        <end position="43"/>
    </location>
</feature>
<dbReference type="EMBL" id="CP000236">
    <property type="protein sequence ID" value="ABD45172.1"/>
    <property type="molecule type" value="Genomic_DNA"/>
</dbReference>
<dbReference type="RefSeq" id="WP_011452594.1">
    <property type="nucleotide sequence ID" value="NC_007799.1"/>
</dbReference>
<dbReference type="SMR" id="Q2GH38"/>
<dbReference type="STRING" id="205920.ECH_0427"/>
<dbReference type="KEGG" id="ech:ECH_0427"/>
<dbReference type="eggNOG" id="COG0200">
    <property type="taxonomic scope" value="Bacteria"/>
</dbReference>
<dbReference type="HOGENOM" id="CLU_055188_4_0_5"/>
<dbReference type="OrthoDB" id="9810293at2"/>
<dbReference type="Proteomes" id="UP000008320">
    <property type="component" value="Chromosome"/>
</dbReference>
<dbReference type="GO" id="GO:0015934">
    <property type="term" value="C:large ribosomal subunit"/>
    <property type="evidence" value="ECO:0007669"/>
    <property type="project" value="InterPro"/>
</dbReference>
<dbReference type="GO" id="GO:0019843">
    <property type="term" value="F:rRNA binding"/>
    <property type="evidence" value="ECO:0007669"/>
    <property type="project" value="UniProtKB-UniRule"/>
</dbReference>
<dbReference type="GO" id="GO:0003735">
    <property type="term" value="F:structural constituent of ribosome"/>
    <property type="evidence" value="ECO:0007669"/>
    <property type="project" value="InterPro"/>
</dbReference>
<dbReference type="GO" id="GO:0006412">
    <property type="term" value="P:translation"/>
    <property type="evidence" value="ECO:0007669"/>
    <property type="project" value="UniProtKB-UniRule"/>
</dbReference>
<dbReference type="Gene3D" id="3.100.10.10">
    <property type="match status" value="1"/>
</dbReference>
<dbReference type="HAMAP" id="MF_01341">
    <property type="entry name" value="Ribosomal_uL15"/>
    <property type="match status" value="1"/>
</dbReference>
<dbReference type="InterPro" id="IPR030878">
    <property type="entry name" value="Ribosomal_uL15"/>
</dbReference>
<dbReference type="InterPro" id="IPR021131">
    <property type="entry name" value="Ribosomal_uL15/eL18"/>
</dbReference>
<dbReference type="InterPro" id="IPR036227">
    <property type="entry name" value="Ribosomal_uL15/eL18_sf"/>
</dbReference>
<dbReference type="InterPro" id="IPR005749">
    <property type="entry name" value="Ribosomal_uL15_bac-type"/>
</dbReference>
<dbReference type="NCBIfam" id="TIGR01071">
    <property type="entry name" value="rplO_bact"/>
    <property type="match status" value="1"/>
</dbReference>
<dbReference type="PANTHER" id="PTHR12934">
    <property type="entry name" value="50S RIBOSOMAL PROTEIN L15"/>
    <property type="match status" value="1"/>
</dbReference>
<dbReference type="PANTHER" id="PTHR12934:SF11">
    <property type="entry name" value="LARGE RIBOSOMAL SUBUNIT PROTEIN UL15M"/>
    <property type="match status" value="1"/>
</dbReference>
<dbReference type="Pfam" id="PF00828">
    <property type="entry name" value="Ribosomal_L27A"/>
    <property type="match status" value="1"/>
</dbReference>
<dbReference type="SUPFAM" id="SSF52080">
    <property type="entry name" value="Ribosomal proteins L15p and L18e"/>
    <property type="match status" value="1"/>
</dbReference>
<evidence type="ECO:0000255" key="1">
    <source>
        <dbReference type="HAMAP-Rule" id="MF_01341"/>
    </source>
</evidence>
<evidence type="ECO:0000256" key="2">
    <source>
        <dbReference type="SAM" id="MobiDB-lite"/>
    </source>
</evidence>
<evidence type="ECO:0000305" key="3"/>
<reference key="1">
    <citation type="journal article" date="2006" name="PLoS Genet.">
        <title>Comparative genomics of emerging human ehrlichiosis agents.</title>
        <authorList>
            <person name="Dunning Hotopp J.C."/>
            <person name="Lin M."/>
            <person name="Madupu R."/>
            <person name="Crabtree J."/>
            <person name="Angiuoli S.V."/>
            <person name="Eisen J.A."/>
            <person name="Seshadri R."/>
            <person name="Ren Q."/>
            <person name="Wu M."/>
            <person name="Utterback T.R."/>
            <person name="Smith S."/>
            <person name="Lewis M."/>
            <person name="Khouri H."/>
            <person name="Zhang C."/>
            <person name="Niu H."/>
            <person name="Lin Q."/>
            <person name="Ohashi N."/>
            <person name="Zhi N."/>
            <person name="Nelson W.C."/>
            <person name="Brinkac L.M."/>
            <person name="Dodson R.J."/>
            <person name="Rosovitz M.J."/>
            <person name="Sundaram J.P."/>
            <person name="Daugherty S.C."/>
            <person name="Davidsen T."/>
            <person name="Durkin A.S."/>
            <person name="Gwinn M.L."/>
            <person name="Haft D.H."/>
            <person name="Selengut J.D."/>
            <person name="Sullivan S.A."/>
            <person name="Zafar N."/>
            <person name="Zhou L."/>
            <person name="Benahmed F."/>
            <person name="Forberger H."/>
            <person name="Halpin R."/>
            <person name="Mulligan S."/>
            <person name="Robinson J."/>
            <person name="White O."/>
            <person name="Rikihisa Y."/>
            <person name="Tettelin H."/>
        </authorList>
    </citation>
    <scope>NUCLEOTIDE SEQUENCE [LARGE SCALE GENOMIC DNA]</scope>
    <source>
        <strain>ATCC CRL-10679 / Arkansas</strain>
    </source>
</reference>
<protein>
    <recommendedName>
        <fullName evidence="1">Large ribosomal subunit protein uL15</fullName>
    </recommendedName>
    <alternativeName>
        <fullName evidence="3">50S ribosomal protein L15</fullName>
    </alternativeName>
</protein>